<sequence length="471" mass="52195">MKDSIVLYSALGRGHLVSMVELGKLILSHHPSLSITILFLTPPPNQDTPTSPTAFTCDATAKYIAAVTAATPSITFHRIPQISIPTVLPPMALTFELCRATGHHLRRILTSISQTSNLKAIVLDFMNYSAARVTNTLQIPTYFYYTSGASTLAVLFQQIIIHQNNTKSIKDLNMHLLIPGLPKIHTDDMPEQVQDRENEGYEVFIDIATCMRDSDGVIVNTFEAMEGRVMEAFNEGLMEGPTPPLFCIGPVISSAPCRVDDDGCLSWLDSQPSHSVVFLSFGSMGRFSRTQLREIAIGLEKSEQRFLWVVRSEFEEGDSVEPPSLDELLPEGFLERTKGKGMVLRDWAPQAAILSHDSVGGFVTHCGWNSVLEAVCEGVPMVAWPLYAEQKLNKVILVEEMKVGLAVKQNKDGLVSSTELGDRVRELMDSDRGKEIRQKIFKMKMSANEAMAKGGSSIMALNRLVEVWREH</sequence>
<feature type="chain" id="PRO_0000439664" description="UDP-glycosyltransferase 1">
    <location>
        <begin position="1"/>
        <end position="471"/>
    </location>
</feature>
<feature type="active site" description="Proton acceptor" evidence="1">
    <location>
        <position position="15"/>
    </location>
</feature>
<feature type="active site" description="Charge relay" evidence="1">
    <location>
        <position position="124"/>
    </location>
</feature>
<feature type="binding site" evidence="2">
    <location>
        <position position="15"/>
    </location>
    <ligand>
        <name>an anthocyanidin</name>
        <dbReference type="ChEBI" id="CHEBI:143576"/>
    </ligand>
</feature>
<feature type="binding site" evidence="1">
    <location>
        <position position="146"/>
    </location>
    <ligand>
        <name>UDP-alpha-D-glucose</name>
        <dbReference type="ChEBI" id="CHEBI:58885"/>
    </ligand>
</feature>
<feature type="binding site" evidence="1">
    <location>
        <position position="348"/>
    </location>
    <ligand>
        <name>UDP-alpha-D-glucose</name>
        <dbReference type="ChEBI" id="CHEBI:58885"/>
    </ligand>
</feature>
<feature type="binding site" evidence="1">
    <location>
        <position position="350"/>
    </location>
    <ligand>
        <name>UDP-alpha-D-glucose</name>
        <dbReference type="ChEBI" id="CHEBI:58885"/>
    </ligand>
</feature>
<feature type="binding site" evidence="1">
    <location>
        <position position="365"/>
    </location>
    <ligand>
        <name>UDP-alpha-D-glucose</name>
        <dbReference type="ChEBI" id="CHEBI:58885"/>
    </ligand>
</feature>
<feature type="binding site" evidence="1">
    <location>
        <position position="368"/>
    </location>
    <ligand>
        <name>UDP-alpha-D-glucose</name>
        <dbReference type="ChEBI" id="CHEBI:58885"/>
    </ligand>
</feature>
<feature type="binding site" evidence="1">
    <location>
        <position position="369"/>
    </location>
    <ligand>
        <name>UDP-alpha-D-glucose</name>
        <dbReference type="ChEBI" id="CHEBI:58885"/>
    </ligand>
</feature>
<feature type="binding site" evidence="1">
    <location>
        <position position="370"/>
    </location>
    <ligand>
        <name>UDP-alpha-D-glucose</name>
        <dbReference type="ChEBI" id="CHEBI:58885"/>
    </ligand>
</feature>
<feature type="binding site" evidence="1">
    <location>
        <position position="373"/>
    </location>
    <ligand>
        <name>UDP-alpha-D-glucose</name>
        <dbReference type="ChEBI" id="CHEBI:58885"/>
    </ligand>
</feature>
<feature type="binding site" evidence="2">
    <location>
        <position position="388"/>
    </location>
    <ligand>
        <name>an anthocyanidin</name>
        <dbReference type="ChEBI" id="CHEBI:143576"/>
    </ligand>
</feature>
<feature type="binding site" evidence="1">
    <location>
        <position position="389"/>
    </location>
    <ligand>
        <name>UDP-alpha-D-glucose</name>
        <dbReference type="ChEBI" id="CHEBI:58885"/>
    </ligand>
</feature>
<feature type="binding site" evidence="1">
    <location>
        <position position="390"/>
    </location>
    <ligand>
        <name>UDP-alpha-D-glucose</name>
        <dbReference type="ChEBI" id="CHEBI:58885"/>
    </ligand>
</feature>
<name>UGT1_PUEML</name>
<organism evidence="6">
    <name type="scientific">Pueraria montana var. lobata</name>
    <name type="common">Kudzu vine</name>
    <name type="synonym">Pueraria lobata</name>
    <dbReference type="NCBI Taxonomy" id="3893"/>
    <lineage>
        <taxon>Eukaryota</taxon>
        <taxon>Viridiplantae</taxon>
        <taxon>Streptophyta</taxon>
        <taxon>Embryophyta</taxon>
        <taxon>Tracheophyta</taxon>
        <taxon>Spermatophyta</taxon>
        <taxon>Magnoliopsida</taxon>
        <taxon>eudicotyledons</taxon>
        <taxon>Gunneridae</taxon>
        <taxon>Pentapetalae</taxon>
        <taxon>rosids</taxon>
        <taxon>fabids</taxon>
        <taxon>Fabales</taxon>
        <taxon>Fabaceae</taxon>
        <taxon>Papilionoideae</taxon>
        <taxon>50 kb inversion clade</taxon>
        <taxon>NPAAA clade</taxon>
        <taxon>indigoferoid/millettioid clade</taxon>
        <taxon>Phaseoleae</taxon>
        <taxon>Pueraria</taxon>
    </lineage>
</organism>
<comment type="function">
    <text evidence="3">Isoflavone 7-O-glucosyltransferase converting daidzein to daidzin, genistein to genistin and formononetin to ononin (PubMed:24700248). Shows some activity toward the chalcone isoliquiritigenin, the flavanones liquiritigenin and naringenin, and the flavone apigenin, but not toward cyanidin, luteolin, kaempferol, quercetin, daidzin and puerarin (PubMed:24700248).</text>
</comment>
<comment type="catalytic activity">
    <reaction evidence="3">
        <text>a 7-hydroxyisoflavone + UDP-alpha-D-glucose = a 7-hydroxyisoflavone 7-O-beta-D-glucoside + UDP + H(+)</text>
        <dbReference type="Rhea" id="RHEA:56344"/>
        <dbReference type="ChEBI" id="CHEBI:15378"/>
        <dbReference type="ChEBI" id="CHEBI:55465"/>
        <dbReference type="ChEBI" id="CHEBI:58223"/>
        <dbReference type="ChEBI" id="CHEBI:58885"/>
        <dbReference type="ChEBI" id="CHEBI:140301"/>
        <dbReference type="EC" id="2.4.1.170"/>
    </reaction>
</comment>
<comment type="biophysicochemical properties">
    <kinetics>
        <KM evidence="3">20.4 uM for genistein</KM>
        <KM evidence="3">29.9 uM for daidzein</KM>
        <text evidence="3">kcat is 1.1 sec(-1) with daidzein as substrate. kcat is 1.1 sec(-1) with genistein as substrate.</text>
    </kinetics>
</comment>
<comment type="tissue specificity">
    <text evidence="3">Expressed in roots. Detected in stems and leaves.</text>
</comment>
<comment type="induction">
    <text evidence="3">Up-regulated by methyl jasmonate.</text>
</comment>
<comment type="similarity">
    <text evidence="5">Belongs to the UDP-glycosyltransferase family.</text>
</comment>
<accession>A0A067YB04</accession>
<proteinExistence type="evidence at protein level"/>
<evidence type="ECO:0000250" key="1">
    <source>
        <dbReference type="UniProtKB" id="A0A0A1HA03"/>
    </source>
</evidence>
<evidence type="ECO:0000250" key="2">
    <source>
        <dbReference type="UniProtKB" id="P51094"/>
    </source>
</evidence>
<evidence type="ECO:0000269" key="3">
    <source>
    </source>
</evidence>
<evidence type="ECO:0000303" key="4">
    <source>
    </source>
</evidence>
<evidence type="ECO:0000305" key="5"/>
<evidence type="ECO:0000312" key="6">
    <source>
        <dbReference type="EMBL" id="AGZ84545.1"/>
    </source>
</evidence>
<reference key="1">
    <citation type="journal article" date="2014" name="Plant Cell Rep.">
        <title>Molecular cloning and characterization of an isoflavone 7-O-glucosyltransferase from Pueraria lobata.</title>
        <authorList>
            <person name="Li J."/>
            <person name="Li Z."/>
            <person name="Li C."/>
            <person name="Gou J."/>
            <person name="Zhang Y."/>
        </authorList>
    </citation>
    <scope>NUCLEOTIDE SEQUENCE [MRNA]</scope>
    <scope>FUNCTION</scope>
    <scope>CATALYTIC ACTIVITY</scope>
    <scope>SUBSTRATE SPECIFICITY</scope>
    <scope>BIOPHYSICOCHEMICAL PROPERTIES</scope>
    <scope>INDUCTION BY METHYL JASMONATE</scope>
    <scope>TISSUE SPECIFICITY</scope>
</reference>
<dbReference type="EC" id="2.4.1.170" evidence="3"/>
<dbReference type="EMBL" id="KC473565">
    <property type="protein sequence ID" value="AGZ84545.1"/>
    <property type="molecule type" value="mRNA"/>
</dbReference>
<dbReference type="SMR" id="A0A067YB04"/>
<dbReference type="GO" id="GO:0050004">
    <property type="term" value="F:isoflavone 7-O-glucosyltransferase activity"/>
    <property type="evidence" value="ECO:0007669"/>
    <property type="project" value="UniProtKB-EC"/>
</dbReference>
<dbReference type="CDD" id="cd03784">
    <property type="entry name" value="GT1_Gtf-like"/>
    <property type="match status" value="1"/>
</dbReference>
<dbReference type="FunFam" id="3.40.50.2000:FF:000020">
    <property type="entry name" value="Glycosyltransferase"/>
    <property type="match status" value="1"/>
</dbReference>
<dbReference type="FunFam" id="3.40.50.2000:FF:000095">
    <property type="entry name" value="Glycosyltransferase"/>
    <property type="match status" value="1"/>
</dbReference>
<dbReference type="Gene3D" id="3.40.50.2000">
    <property type="entry name" value="Glycogen Phosphorylase B"/>
    <property type="match status" value="2"/>
</dbReference>
<dbReference type="InterPro" id="IPR050481">
    <property type="entry name" value="UDP-glycosyltransf_plant"/>
</dbReference>
<dbReference type="InterPro" id="IPR002213">
    <property type="entry name" value="UDP_glucos_trans"/>
</dbReference>
<dbReference type="InterPro" id="IPR035595">
    <property type="entry name" value="UDP_glycos_trans_CS"/>
</dbReference>
<dbReference type="PANTHER" id="PTHR48048">
    <property type="entry name" value="GLYCOSYLTRANSFERASE"/>
    <property type="match status" value="1"/>
</dbReference>
<dbReference type="PANTHER" id="PTHR48048:SF33">
    <property type="entry name" value="ISOFLAVONE 7-O-GLUCOSYLTRANSFERASE 1"/>
    <property type="match status" value="1"/>
</dbReference>
<dbReference type="Pfam" id="PF00201">
    <property type="entry name" value="UDPGT"/>
    <property type="match status" value="1"/>
</dbReference>
<dbReference type="SUPFAM" id="SSF53756">
    <property type="entry name" value="UDP-Glycosyltransferase/glycogen phosphorylase"/>
    <property type="match status" value="1"/>
</dbReference>
<dbReference type="PROSITE" id="PS00375">
    <property type="entry name" value="UDPGT"/>
    <property type="match status" value="1"/>
</dbReference>
<protein>
    <recommendedName>
        <fullName evidence="4">UDP-glycosyltransferase 1</fullName>
        <shortName evidence="4">PlUGT1</shortName>
        <ecNumber evidence="3">2.4.1.170</ecNumber>
    </recommendedName>
    <alternativeName>
        <fullName evidence="4">Glycosyltransferase UGT88E12</fullName>
    </alternativeName>
    <alternativeName>
        <fullName evidence="6">UDP-glucose:isoflavone 7-O-glucosyltransferase KGT1</fullName>
    </alternativeName>
</protein>
<keyword id="KW-0328">Glycosyltransferase</keyword>
<keyword id="KW-0808">Transferase</keyword>
<gene>
    <name evidence="4" type="primary">UGT1</name>
    <name evidence="4" type="synonym">UGT88E12</name>
</gene>